<accession>Q8WUA8</accession>
<accession>B3KQT7</accession>
<accession>Q6UXK1</accession>
<accession>Q9UG10</accession>
<accession>Q9UJX9</accession>
<proteinExistence type="evidence at protein level"/>
<evidence type="ECO:0000250" key="1">
    <source>
        <dbReference type="UniProtKB" id="Q65Z91"/>
    </source>
</evidence>
<evidence type="ECO:0000250" key="2">
    <source>
        <dbReference type="UniProtKB" id="Q8CBR6"/>
    </source>
</evidence>
<evidence type="ECO:0000255" key="3"/>
<evidence type="ECO:0000269" key="4">
    <source>
    </source>
</evidence>
<evidence type="ECO:0000269" key="5">
    <source>
    </source>
</evidence>
<evidence type="ECO:0000269" key="6">
    <source>
    </source>
</evidence>
<evidence type="ECO:0000269" key="7">
    <source>
    </source>
</evidence>
<evidence type="ECO:0000269" key="8">
    <source>
    </source>
</evidence>
<evidence type="ECO:0000269" key="9">
    <source ref="3"/>
</evidence>
<evidence type="ECO:0000303" key="10">
    <source>
    </source>
</evidence>
<evidence type="ECO:0000305" key="11"/>
<sequence length="353" mass="37807">MPWPLLLLLAVSGAQTTRPCFPGCQCEVETFGLFDSFSLTRVDCSGLGPHIMPVPIPLDTAHLDLSSNRLEMVNESVLAGPGYTTLAGLDLSHNLLTSISPTAFSRLRYLESLDLSHNGLTALPAESFTSSPLSDVNLSHNQLREVSVSAFTTHSQGRALHVDLSHNLIHRLVPHPTRAGLPAPTIQSLNLAWNRLHAVPNLRDLPLRYLSLDGNPLAVIGPGAFAGLGGLTHLSLASLQRLPELAPSGFRELPGLQVLDLSGNPKLNWAGAEVFSGLSSLQELDLSGTNLVPLPEALLLHLPALQSVSVGQDVRCRRLVREGTYPRRPGSSPKVALHCVDTRDSAARGPTIL</sequence>
<reference key="1">
    <citation type="journal article" date="2000" name="Cancer Res.">
        <title>Effects of estrogen on global gene expression: identification of novel targets of estrogen action.</title>
        <authorList>
            <person name="Charpentier A.H."/>
            <person name="Bednarek A.K."/>
            <person name="Daniel R.L."/>
            <person name="Hawkins K.A."/>
            <person name="Laflin K.J."/>
            <person name="Gaddis S."/>
            <person name="MacLeod M.C."/>
            <person name="Aldaz C.M."/>
        </authorList>
    </citation>
    <scope>NUCLEOTIDE SEQUENCE [LARGE SCALE MRNA]</scope>
</reference>
<reference key="2">
    <citation type="journal article" date="2003" name="Genome Res.">
        <title>The secreted protein discovery initiative (SPDI), a large-scale effort to identify novel human secreted and transmembrane proteins: a bioinformatics assessment.</title>
        <authorList>
            <person name="Clark H.F."/>
            <person name="Gurney A.L."/>
            <person name="Abaya E."/>
            <person name="Baker K."/>
            <person name="Baldwin D.T."/>
            <person name="Brush J."/>
            <person name="Chen J."/>
            <person name="Chow B."/>
            <person name="Chui C."/>
            <person name="Crowley C."/>
            <person name="Currell B."/>
            <person name="Deuel B."/>
            <person name="Dowd P."/>
            <person name="Eaton D."/>
            <person name="Foster J.S."/>
            <person name="Grimaldi C."/>
            <person name="Gu Q."/>
            <person name="Hass P.E."/>
            <person name="Heldens S."/>
            <person name="Huang A."/>
            <person name="Kim H.S."/>
            <person name="Klimowski L."/>
            <person name="Jin Y."/>
            <person name="Johnson S."/>
            <person name="Lee J."/>
            <person name="Lewis L."/>
            <person name="Liao D."/>
            <person name="Mark M.R."/>
            <person name="Robbie E."/>
            <person name="Sanchez C."/>
            <person name="Schoenfeld J."/>
            <person name="Seshagiri S."/>
            <person name="Simmons L."/>
            <person name="Singh J."/>
            <person name="Smith V."/>
            <person name="Stinson J."/>
            <person name="Vagts A."/>
            <person name="Vandlen R.L."/>
            <person name="Watanabe C."/>
            <person name="Wieand D."/>
            <person name="Woods K."/>
            <person name="Xie M.-H."/>
            <person name="Yansura D.G."/>
            <person name="Yi S."/>
            <person name="Yu G."/>
            <person name="Yuan J."/>
            <person name="Zhang M."/>
            <person name="Zhang Z."/>
            <person name="Goddard A.D."/>
            <person name="Wood W.I."/>
            <person name="Godowski P.J."/>
            <person name="Gray A.M."/>
        </authorList>
    </citation>
    <scope>NUCLEOTIDE SEQUENCE [LARGE SCALE MRNA]</scope>
    <scope>VARIANT GLU-344</scope>
</reference>
<reference key="3">
    <citation type="submission" date="2003-05" db="EMBL/GenBank/DDBJ databases">
        <title>Cloning of human full-length CDSs in BD Creator(TM) system donor vector.</title>
        <authorList>
            <person name="Kalnine N."/>
            <person name="Chen X."/>
            <person name="Rolfs A."/>
            <person name="Halleck A."/>
            <person name="Hines L."/>
            <person name="Eisenstein S."/>
            <person name="Koundinya M."/>
            <person name="Raphael J."/>
            <person name="Moreira D."/>
            <person name="Kelley T."/>
            <person name="LaBaer J."/>
            <person name="Lin Y."/>
            <person name="Phelan M."/>
            <person name="Farmer A."/>
        </authorList>
    </citation>
    <scope>NUCLEOTIDE SEQUENCE [LARGE SCALE MRNA]</scope>
    <scope>VARIANT GLU-344</scope>
</reference>
<reference key="4">
    <citation type="journal article" date="2005" name="DNA Res.">
        <title>Signal sequence and keyword trap in silico for selection of full-length human cDNAs encoding secretion or membrane proteins from oligo-capped cDNA libraries.</title>
        <authorList>
            <person name="Otsuki T."/>
            <person name="Ota T."/>
            <person name="Nishikawa T."/>
            <person name="Hayashi K."/>
            <person name="Suzuki Y."/>
            <person name="Yamamoto J."/>
            <person name="Wakamatsu A."/>
            <person name="Kimura K."/>
            <person name="Sakamoto K."/>
            <person name="Hatano N."/>
            <person name="Kawai Y."/>
            <person name="Ishii S."/>
            <person name="Saito K."/>
            <person name="Kojima S."/>
            <person name="Sugiyama T."/>
            <person name="Ono T."/>
            <person name="Okano K."/>
            <person name="Yoshikawa Y."/>
            <person name="Aotsuka S."/>
            <person name="Sasaki N."/>
            <person name="Hattori A."/>
            <person name="Okumura K."/>
            <person name="Nagai K."/>
            <person name="Sugano S."/>
            <person name="Isogai T."/>
        </authorList>
    </citation>
    <scope>NUCLEOTIDE SEQUENCE [LARGE SCALE MRNA]</scope>
    <scope>VARIANT GLU-344</scope>
    <source>
        <tissue>Placenta</tissue>
    </source>
</reference>
<reference key="5">
    <citation type="journal article" date="2004" name="Genome Res.">
        <title>The status, quality, and expansion of the NIH full-length cDNA project: the Mammalian Gene Collection (MGC).</title>
        <authorList>
            <consortium name="The MGC Project Team"/>
        </authorList>
    </citation>
    <scope>NUCLEOTIDE SEQUENCE [LARGE SCALE MRNA]</scope>
    <scope>VARIANT GLU-344</scope>
    <source>
        <tissue>Colon</tissue>
    </source>
</reference>
<reference key="6">
    <citation type="journal article" date="2007" name="BMC Genomics">
        <title>The full-ORF clone resource of the German cDNA consortium.</title>
        <authorList>
            <person name="Bechtel S."/>
            <person name="Rosenfelder H."/>
            <person name="Duda A."/>
            <person name="Schmidt C.P."/>
            <person name="Ernst U."/>
            <person name="Wellenreuther R."/>
            <person name="Mehrle A."/>
            <person name="Schuster C."/>
            <person name="Bahr A."/>
            <person name="Bloecker H."/>
            <person name="Heubner D."/>
            <person name="Hoerlein A."/>
            <person name="Michel G."/>
            <person name="Wedler H."/>
            <person name="Koehrer K."/>
            <person name="Ottenwaelder B."/>
            <person name="Poustka A."/>
            <person name="Wiemann S."/>
            <person name="Schupp I."/>
        </authorList>
    </citation>
    <scope>NUCLEOTIDE SEQUENCE [LARGE SCALE MRNA] OF 112-353</scope>
    <scope>VARIANT GLU-344</scope>
    <source>
        <tissue>Uterus</tissue>
    </source>
</reference>
<reference key="7">
    <citation type="journal article" date="2019" name="J. Cell Commun. Signal.">
        <title>CCN2/CTGF binds the small leucine rich proteoglycan protein Tsukushi.</title>
        <authorList>
            <person name="Ohta K."/>
            <person name="Aoyama E."/>
            <person name="Ahmad S.A.I."/>
            <person name="Ito N."/>
            <person name="Anam M.B."/>
            <person name="Kubota S."/>
            <person name="Takigawa M."/>
        </authorList>
    </citation>
    <scope>INTERACTION WITH CCN2</scope>
</reference>
<dbReference type="EMBL" id="AF191019">
    <property type="protein sequence ID" value="AAF09483.1"/>
    <property type="molecule type" value="mRNA"/>
</dbReference>
<dbReference type="EMBL" id="AY358317">
    <property type="protein sequence ID" value="AAQ88683.1"/>
    <property type="molecule type" value="mRNA"/>
</dbReference>
<dbReference type="EMBL" id="BT007440">
    <property type="protein sequence ID" value="AAP36108.1"/>
    <property type="molecule type" value="mRNA"/>
</dbReference>
<dbReference type="EMBL" id="AK075476">
    <property type="protein sequence ID" value="BAG52149.1"/>
    <property type="molecule type" value="mRNA"/>
</dbReference>
<dbReference type="EMBL" id="BC020975">
    <property type="protein sequence ID" value="AAH20975.1"/>
    <property type="molecule type" value="mRNA"/>
</dbReference>
<dbReference type="EMBL" id="AL110276">
    <property type="protein sequence ID" value="CAB53711.1"/>
    <property type="molecule type" value="mRNA"/>
</dbReference>
<dbReference type="CCDS" id="CCDS8246.1"/>
<dbReference type="PIR" id="T14791">
    <property type="entry name" value="T14791"/>
</dbReference>
<dbReference type="RefSeq" id="NP_001245139.1">
    <property type="nucleotide sequence ID" value="NM_001258210.2"/>
</dbReference>
<dbReference type="RefSeq" id="NP_001305406.1">
    <property type="nucleotide sequence ID" value="NM_001318477.1"/>
</dbReference>
<dbReference type="RefSeq" id="NP_001305407.1">
    <property type="nucleotide sequence ID" value="NM_001318478.2"/>
</dbReference>
<dbReference type="RefSeq" id="NP_001305408.1">
    <property type="nucleotide sequence ID" value="NM_001318479.2"/>
</dbReference>
<dbReference type="RefSeq" id="NP_056331.2">
    <property type="nucleotide sequence ID" value="NM_015516.3"/>
</dbReference>
<dbReference type="RefSeq" id="XP_047282682.1">
    <property type="nucleotide sequence ID" value="XM_047426726.1"/>
</dbReference>
<dbReference type="SMR" id="Q8WUA8"/>
<dbReference type="BioGRID" id="117468">
    <property type="interactions" value="9"/>
</dbReference>
<dbReference type="FunCoup" id="Q8WUA8">
    <property type="interactions" value="208"/>
</dbReference>
<dbReference type="IntAct" id="Q8WUA8">
    <property type="interactions" value="3"/>
</dbReference>
<dbReference type="MINT" id="Q8WUA8"/>
<dbReference type="STRING" id="9606.ENSP00000434847"/>
<dbReference type="GlyCosmos" id="Q8WUA8">
    <property type="glycosylation" value="2 sites, No reported glycans"/>
</dbReference>
<dbReference type="GlyGen" id="Q8WUA8">
    <property type="glycosylation" value="6 sites, 1 O-linked glycan (4 sites)"/>
</dbReference>
<dbReference type="iPTMnet" id="Q8WUA8"/>
<dbReference type="PhosphoSitePlus" id="Q8WUA8"/>
<dbReference type="BioMuta" id="TSKU"/>
<dbReference type="DMDM" id="116242832"/>
<dbReference type="jPOST" id="Q8WUA8"/>
<dbReference type="MassIVE" id="Q8WUA8"/>
<dbReference type="PaxDb" id="9606-ENSP00000434847"/>
<dbReference type="PeptideAtlas" id="Q8WUA8"/>
<dbReference type="ProteomicsDB" id="74652"/>
<dbReference type="Pumba" id="Q8WUA8"/>
<dbReference type="Antibodypedia" id="2163">
    <property type="antibodies" value="79 antibodies from 18 providers"/>
</dbReference>
<dbReference type="DNASU" id="25987"/>
<dbReference type="Ensembl" id="ENST00000333090.5">
    <property type="protein sequence ID" value="ENSP00000332668.4"/>
    <property type="gene ID" value="ENSG00000182704.8"/>
</dbReference>
<dbReference type="Ensembl" id="ENST00000527881.1">
    <property type="protein sequence ID" value="ENSP00000434847.1"/>
    <property type="gene ID" value="ENSG00000182704.8"/>
</dbReference>
<dbReference type="Ensembl" id="ENST00000612930.1">
    <property type="protein sequence ID" value="ENSP00000482145.1"/>
    <property type="gene ID" value="ENSG00000182704.8"/>
</dbReference>
<dbReference type="GeneID" id="25987"/>
<dbReference type="KEGG" id="hsa:25987"/>
<dbReference type="MANE-Select" id="ENST00000333090.5">
    <property type="protein sequence ID" value="ENSP00000332668.4"/>
    <property type="RefSeq nucleotide sequence ID" value="NM_015516.4"/>
    <property type="RefSeq protein sequence ID" value="NP_056331.2"/>
</dbReference>
<dbReference type="UCSC" id="uc001oxt.4">
    <property type="organism name" value="human"/>
</dbReference>
<dbReference type="AGR" id="HGNC:28850"/>
<dbReference type="CTD" id="25987"/>
<dbReference type="DisGeNET" id="25987"/>
<dbReference type="GeneCards" id="TSKU"/>
<dbReference type="HGNC" id="HGNC:28850">
    <property type="gene designation" value="TSKU"/>
</dbReference>
<dbReference type="HPA" id="ENSG00000182704">
    <property type="expression patterns" value="Tissue enhanced (liver)"/>
</dbReference>
<dbReference type="MIM" id="608015">
    <property type="type" value="gene"/>
</dbReference>
<dbReference type="neXtProt" id="NX_Q8WUA8"/>
<dbReference type="OpenTargets" id="ENSG00000182704"/>
<dbReference type="PharmGKB" id="PA162407150"/>
<dbReference type="VEuPathDB" id="HostDB:ENSG00000182704"/>
<dbReference type="eggNOG" id="KOG0619">
    <property type="taxonomic scope" value="Eukaryota"/>
</dbReference>
<dbReference type="GeneTree" id="ENSGT00940000160984"/>
<dbReference type="HOGENOM" id="CLU_785168_0_0_1"/>
<dbReference type="InParanoid" id="Q8WUA8"/>
<dbReference type="OMA" id="PCFPGCH"/>
<dbReference type="OrthoDB" id="676979at2759"/>
<dbReference type="PAN-GO" id="Q8WUA8">
    <property type="GO annotations" value="1 GO annotation based on evolutionary models"/>
</dbReference>
<dbReference type="PhylomeDB" id="Q8WUA8"/>
<dbReference type="TreeFam" id="TF343079"/>
<dbReference type="PathwayCommons" id="Q8WUA8"/>
<dbReference type="SignaLink" id="Q8WUA8"/>
<dbReference type="BioGRID-ORCS" id="25987">
    <property type="hits" value="19 hits in 1146 CRISPR screens"/>
</dbReference>
<dbReference type="ChiTaRS" id="TSKU">
    <property type="organism name" value="human"/>
</dbReference>
<dbReference type="GenomeRNAi" id="25987"/>
<dbReference type="Pharos" id="Q8WUA8">
    <property type="development level" value="Tbio"/>
</dbReference>
<dbReference type="PRO" id="PR:Q8WUA8"/>
<dbReference type="Proteomes" id="UP000005640">
    <property type="component" value="Chromosome 11"/>
</dbReference>
<dbReference type="RNAct" id="Q8WUA8">
    <property type="molecule type" value="protein"/>
</dbReference>
<dbReference type="Bgee" id="ENSG00000182704">
    <property type="expression patterns" value="Expressed in decidua and 165 other cell types or tissues"/>
</dbReference>
<dbReference type="ExpressionAtlas" id="Q8WUA8">
    <property type="expression patterns" value="baseline and differential"/>
</dbReference>
<dbReference type="GO" id="GO:0005615">
    <property type="term" value="C:extracellular space"/>
    <property type="evidence" value="ECO:0000250"/>
    <property type="project" value="UniProtKB"/>
</dbReference>
<dbReference type="GO" id="GO:0050431">
    <property type="term" value="F:transforming growth factor beta binding"/>
    <property type="evidence" value="ECO:0000250"/>
    <property type="project" value="UniProtKB"/>
</dbReference>
<dbReference type="GO" id="GO:0021960">
    <property type="term" value="P:anterior commissure morphogenesis"/>
    <property type="evidence" value="ECO:0000250"/>
    <property type="project" value="UniProtKB"/>
</dbReference>
<dbReference type="GO" id="GO:0098868">
    <property type="term" value="P:bone growth"/>
    <property type="evidence" value="ECO:0000250"/>
    <property type="project" value="UniProtKB"/>
</dbReference>
<dbReference type="GO" id="GO:0043010">
    <property type="term" value="P:camera-type eye development"/>
    <property type="evidence" value="ECO:0000250"/>
    <property type="project" value="UniProtKB"/>
</dbReference>
<dbReference type="GO" id="GO:0033344">
    <property type="term" value="P:cholesterol efflux"/>
    <property type="evidence" value="ECO:0000250"/>
    <property type="project" value="UniProtKB"/>
</dbReference>
<dbReference type="GO" id="GO:0042632">
    <property type="term" value="P:cholesterol homeostasis"/>
    <property type="evidence" value="ECO:0000250"/>
    <property type="project" value="UniProtKB"/>
</dbReference>
<dbReference type="GO" id="GO:0008203">
    <property type="term" value="P:cholesterol metabolic process"/>
    <property type="evidence" value="ECO:0000250"/>
    <property type="project" value="UniProtKB"/>
</dbReference>
<dbReference type="GO" id="GO:0061073">
    <property type="term" value="P:ciliary body morphogenesis"/>
    <property type="evidence" value="ECO:0000250"/>
    <property type="project" value="UniProtKB"/>
</dbReference>
<dbReference type="GO" id="GO:0021540">
    <property type="term" value="P:corpus callosum morphogenesis"/>
    <property type="evidence" value="ECO:0007669"/>
    <property type="project" value="Ensembl"/>
</dbReference>
<dbReference type="GO" id="GO:0097009">
    <property type="term" value="P:energy homeostasis"/>
    <property type="evidence" value="ECO:0000250"/>
    <property type="project" value="UniProtKB"/>
</dbReference>
<dbReference type="GO" id="GO:0003431">
    <property type="term" value="P:growth plate cartilage chondrocyte development"/>
    <property type="evidence" value="ECO:0000250"/>
    <property type="project" value="UniProtKB"/>
</dbReference>
<dbReference type="GO" id="GO:0021766">
    <property type="term" value="P:hippocampus development"/>
    <property type="evidence" value="ECO:0000250"/>
    <property type="project" value="UniProtKB"/>
</dbReference>
<dbReference type="GO" id="GO:0006955">
    <property type="term" value="P:immune response"/>
    <property type="evidence" value="ECO:0000318"/>
    <property type="project" value="GO_Central"/>
</dbReference>
<dbReference type="GO" id="GO:0060122">
    <property type="term" value="P:inner ear receptor cell stereocilium organization"/>
    <property type="evidence" value="ECO:0000250"/>
    <property type="project" value="UniProtKB"/>
</dbReference>
<dbReference type="GO" id="GO:0021670">
    <property type="term" value="P:lateral ventricle development"/>
    <property type="evidence" value="ECO:0007669"/>
    <property type="project" value="Ensembl"/>
</dbReference>
<dbReference type="GO" id="GO:1904761">
    <property type="term" value="P:negative regulation of myofibroblast differentiation"/>
    <property type="evidence" value="ECO:0000250"/>
    <property type="project" value="UniProtKB"/>
</dbReference>
<dbReference type="GO" id="GO:0010977">
    <property type="term" value="P:negative regulation of neuron projection development"/>
    <property type="evidence" value="ECO:0000250"/>
    <property type="project" value="UniProtKB"/>
</dbReference>
<dbReference type="GO" id="GO:0032911">
    <property type="term" value="P:negative regulation of transforming growth factor beta1 production"/>
    <property type="evidence" value="ECO:0000250"/>
    <property type="project" value="UniProtKB"/>
</dbReference>
<dbReference type="GO" id="GO:0030178">
    <property type="term" value="P:negative regulation of Wnt signaling pathway"/>
    <property type="evidence" value="ECO:0000250"/>
    <property type="project" value="UniProtKB"/>
</dbReference>
<dbReference type="GO" id="GO:0042635">
    <property type="term" value="P:positive regulation of hair cycle"/>
    <property type="evidence" value="ECO:0000250"/>
    <property type="project" value="UniProtKB"/>
</dbReference>
<dbReference type="GO" id="GO:0010468">
    <property type="term" value="P:regulation of gene expression"/>
    <property type="evidence" value="ECO:0000250"/>
    <property type="project" value="UniProtKB"/>
</dbReference>
<dbReference type="GO" id="GO:0007179">
    <property type="term" value="P:transforming growth factor beta receptor signaling pathway"/>
    <property type="evidence" value="ECO:0000318"/>
    <property type="project" value="GO_Central"/>
</dbReference>
<dbReference type="GO" id="GO:0042060">
    <property type="term" value="P:wound healing"/>
    <property type="evidence" value="ECO:0000250"/>
    <property type="project" value="UniProtKB"/>
</dbReference>
<dbReference type="FunFam" id="3.80.10.10:FF:000609">
    <property type="entry name" value="Tsukushi, small leucine rich proteoglycan"/>
    <property type="match status" value="1"/>
</dbReference>
<dbReference type="FunFam" id="3.80.10.10:FF:000308">
    <property type="entry name" value="tsukushin isoform X3"/>
    <property type="match status" value="1"/>
</dbReference>
<dbReference type="Gene3D" id="3.80.10.10">
    <property type="entry name" value="Ribonuclease Inhibitor"/>
    <property type="match status" value="2"/>
</dbReference>
<dbReference type="InterPro" id="IPR001611">
    <property type="entry name" value="Leu-rich_rpt"/>
</dbReference>
<dbReference type="InterPro" id="IPR003591">
    <property type="entry name" value="Leu-rich_rpt_typical-subtyp"/>
</dbReference>
<dbReference type="InterPro" id="IPR032675">
    <property type="entry name" value="LRR_dom_sf"/>
</dbReference>
<dbReference type="PANTHER" id="PTHR45617">
    <property type="entry name" value="LEUCINE RICH REPEAT FAMILY PROTEIN"/>
    <property type="match status" value="1"/>
</dbReference>
<dbReference type="PANTHER" id="PTHR45617:SF169">
    <property type="entry name" value="LRRCT DOMAIN-CONTAINING PROTEIN"/>
    <property type="match status" value="1"/>
</dbReference>
<dbReference type="Pfam" id="PF00560">
    <property type="entry name" value="LRR_1"/>
    <property type="match status" value="1"/>
</dbReference>
<dbReference type="Pfam" id="PF13855">
    <property type="entry name" value="LRR_8"/>
    <property type="match status" value="2"/>
</dbReference>
<dbReference type="PRINTS" id="PR00019">
    <property type="entry name" value="LEURICHRPT"/>
</dbReference>
<dbReference type="SMART" id="SM00369">
    <property type="entry name" value="LRR_TYP"/>
    <property type="match status" value="8"/>
</dbReference>
<dbReference type="SUPFAM" id="SSF52058">
    <property type="entry name" value="L domain-like"/>
    <property type="match status" value="1"/>
</dbReference>
<dbReference type="PROSITE" id="PS51450">
    <property type="entry name" value="LRR"/>
    <property type="match status" value="8"/>
</dbReference>
<comment type="function">
    <text evidence="2">Contributes to various developmental events and other processes such as wound healing and cholesterol homeostasis through its interactions with multiple signaling pathways. Wnt signaling inhibitor which competes with WNT2B for binding to Wnt receptor FZD4 and represses WNT2B-dependent development of the peripheral eye. Plays a role in regulating the hair cycle by controlling TGFB1 signaling. Required for the development of the anterior commissure in the brain by inhibiting neurite outgrowth. Essential for terminal differentiation of hippocampal neural stem cells. Plays a role in regulating bone elongation and bone mass by modulating growth plate chondrocyte function and overall body size. Required for development of the inner ear through its involvement in stereocilia formation in inner hair cells. Facilitates wound healing by inhibiting secretion of TGFB1 from macrophages which prevents myofibroblast differentiation, maintaining inflammatory cell quiescence. Plays a role in cholesterol homeostasis by reducing circulating high-density lipoprotein cholesterol, lowering cholesterol efflux capacity and decreasing cholesterol-to-bile acid conversion in the liver. In one study, shown to negatively regulate sympathetic innervation in brown fat, leading to reduced energy expenditure. In another study, shown not to affect brown fat thermogenic capacity, body weight gain or glucose homeostasis.</text>
</comment>
<comment type="subunit">
    <text evidence="2 8">Interacts with FZD4 (via FZ domain); competes with WNT2B for binding to FZD4, inhibiting Wnt signaling and repressing peripheral eye development (By similarity). Interacts with TGFB1; the interaction contributes to regulation of the hair cycle (By similarity). Interacts with netrin (By similarity). Interacts with CCN2 (PubMed:30232710).</text>
</comment>
<comment type="subcellular location">
    <subcellularLocation>
        <location evidence="2">Secreted</location>
    </subcellularLocation>
</comment>
<comment type="induction">
    <text>By 17-beta-estradiol.</text>
</comment>
<comment type="miscellaneous">
    <text evidence="1">This factor is named 'Tsukushi' because its expression pattern in chick embryos is similar to the shape of the Japanese horsetail plant, tsukushi.</text>
</comment>
<name>TSK_HUMAN</name>
<gene>
    <name type="primary">TSKU</name>
    <name type="synonym">E2IG4</name>
    <name type="synonym">LRRC54</name>
    <name type="synonym">TSK</name>
    <name type="ORF">UNQ850/PRO1788</name>
</gene>
<protein>
    <recommendedName>
        <fullName evidence="10">Tsukushi</fullName>
    </recommendedName>
    <alternativeName>
        <fullName>E2-induced gene 4 protein</fullName>
    </alternativeName>
    <alternativeName>
        <fullName>Leucine-rich repeat-containing protein 54</fullName>
    </alternativeName>
</protein>
<feature type="signal peptide" evidence="3">
    <location>
        <begin position="1"/>
        <end position="16"/>
    </location>
</feature>
<feature type="chain" id="PRO_0000240407" description="Tsukushi">
    <location>
        <begin position="17"/>
        <end position="353"/>
    </location>
</feature>
<feature type="domain" description="LRRNT">
    <location>
        <begin position="17"/>
        <end position="58"/>
    </location>
</feature>
<feature type="repeat" description="LRR 1">
    <location>
        <begin position="59"/>
        <end position="80"/>
    </location>
</feature>
<feature type="repeat" description="LRR 2">
    <location>
        <begin position="85"/>
        <end position="106"/>
    </location>
</feature>
<feature type="repeat" description="LRR 3">
    <location>
        <begin position="109"/>
        <end position="130"/>
    </location>
</feature>
<feature type="repeat" description="LRR 4">
    <location>
        <begin position="132"/>
        <end position="153"/>
    </location>
</feature>
<feature type="repeat" description="LRR 5">
    <location>
        <begin position="159"/>
        <end position="179"/>
    </location>
</feature>
<feature type="repeat" description="LRR 6">
    <location>
        <begin position="185"/>
        <end position="206"/>
    </location>
</feature>
<feature type="repeat" description="LRR 7">
    <location>
        <begin position="207"/>
        <end position="227"/>
    </location>
</feature>
<feature type="repeat" description="LRR 8">
    <location>
        <begin position="230"/>
        <end position="249"/>
    </location>
</feature>
<feature type="repeat" description="LRR 9">
    <location>
        <begin position="255"/>
        <end position="276"/>
    </location>
</feature>
<feature type="repeat" description="LRR 10">
    <location>
        <begin position="280"/>
        <end position="301"/>
    </location>
</feature>
<feature type="glycosylation site" description="N-linked (GlcNAc...) asparagine" evidence="3">
    <location>
        <position position="74"/>
    </location>
</feature>
<feature type="glycosylation site" description="N-linked (GlcNAc...) asparagine" evidence="3">
    <location>
        <position position="137"/>
    </location>
</feature>
<feature type="sequence variant" id="VAR_028725" description="In dbSNP:rs3740772.">
    <original>R</original>
    <variation>C</variation>
    <location>
        <position position="208"/>
    </location>
</feature>
<feature type="sequence variant" id="VAR_028726" description="In dbSNP:rs11236938.">
    <original>S</original>
    <variation>N</variation>
    <location>
        <position position="248"/>
    </location>
</feature>
<feature type="sequence variant" id="VAR_028727" description="In dbSNP:rs3740771.">
    <original>V</original>
    <variation>I</variation>
    <location>
        <position position="308"/>
    </location>
</feature>
<feature type="sequence variant" id="VAR_026726" description="In dbSNP:rs1149621." evidence="4 5 6 7 9">
    <original>D</original>
    <variation>E</variation>
    <location>
        <position position="344"/>
    </location>
</feature>
<feature type="sequence conflict" description="In Ref. 2; AAQ88683." evidence="11" ref="2">
    <original>A</original>
    <variation>P</variation>
    <location>
        <position position="336"/>
    </location>
</feature>
<keyword id="KW-0217">Developmental protein</keyword>
<keyword id="KW-0325">Glycoprotein</keyword>
<keyword id="KW-0433">Leucine-rich repeat</keyword>
<keyword id="KW-0524">Neurogenesis</keyword>
<keyword id="KW-1267">Proteomics identification</keyword>
<keyword id="KW-1185">Reference proteome</keyword>
<keyword id="KW-0677">Repeat</keyword>
<keyword id="KW-0964">Secreted</keyword>
<keyword id="KW-0732">Signal</keyword>
<organism>
    <name type="scientific">Homo sapiens</name>
    <name type="common">Human</name>
    <dbReference type="NCBI Taxonomy" id="9606"/>
    <lineage>
        <taxon>Eukaryota</taxon>
        <taxon>Metazoa</taxon>
        <taxon>Chordata</taxon>
        <taxon>Craniata</taxon>
        <taxon>Vertebrata</taxon>
        <taxon>Euteleostomi</taxon>
        <taxon>Mammalia</taxon>
        <taxon>Eutheria</taxon>
        <taxon>Euarchontoglires</taxon>
        <taxon>Primates</taxon>
        <taxon>Haplorrhini</taxon>
        <taxon>Catarrhini</taxon>
        <taxon>Hominidae</taxon>
        <taxon>Homo</taxon>
    </lineage>
</organism>